<sequence>MNPRRKSRLKVVVLIMFSVAVAAGLTLYALSQNIDLFYTPSEIVKGKNNDPQLKPAVGQRIRVGGMVVEGSVKRDDKTLKVEFNLNDIGPAITVEYEGILPDLFREGQGIVAQGVLVEPTRLKASEVLAKHDENYMPPELGDKMKQQHNAVGVAEGDLKGESIRDKAELDRTFNTLQGESK</sequence>
<reference key="1">
    <citation type="submission" date="2003-06" db="EMBL/GenBank/DDBJ databases">
        <title>The complete genome sequence of Haemophilus ducreyi.</title>
        <authorList>
            <person name="Munson R.S. Jr."/>
            <person name="Ray W.C."/>
            <person name="Mahairas G."/>
            <person name="Sabo P."/>
            <person name="Mungur R."/>
            <person name="Johnson L."/>
            <person name="Nguyen D."/>
            <person name="Wang J."/>
            <person name="Forst C."/>
            <person name="Hood L."/>
        </authorList>
    </citation>
    <scope>NUCLEOTIDE SEQUENCE [LARGE SCALE GENOMIC DNA]</scope>
    <source>
        <strain>35000HP / ATCC 700724</strain>
    </source>
</reference>
<evidence type="ECO:0000255" key="1">
    <source>
        <dbReference type="HAMAP-Rule" id="MF_01959"/>
    </source>
</evidence>
<gene>
    <name evidence="1" type="primary">ccmE</name>
    <name evidence="1" type="synonym">cycJ</name>
    <name type="ordered locus">HD_0791</name>
</gene>
<organism>
    <name type="scientific">Haemophilus ducreyi (strain 35000HP / ATCC 700724)</name>
    <dbReference type="NCBI Taxonomy" id="233412"/>
    <lineage>
        <taxon>Bacteria</taxon>
        <taxon>Pseudomonadati</taxon>
        <taxon>Pseudomonadota</taxon>
        <taxon>Gammaproteobacteria</taxon>
        <taxon>Pasteurellales</taxon>
        <taxon>Pasteurellaceae</taxon>
        <taxon>Haemophilus</taxon>
    </lineage>
</organism>
<dbReference type="EMBL" id="AE017143">
    <property type="protein sequence ID" value="AAP95693.1"/>
    <property type="molecule type" value="Genomic_DNA"/>
</dbReference>
<dbReference type="RefSeq" id="WP_010944743.1">
    <property type="nucleotide sequence ID" value="NC_002940.2"/>
</dbReference>
<dbReference type="SMR" id="Q7VN08"/>
<dbReference type="STRING" id="233412.HD_0791"/>
<dbReference type="GeneID" id="60733063"/>
<dbReference type="KEGG" id="hdu:HD_0791"/>
<dbReference type="eggNOG" id="COG2332">
    <property type="taxonomic scope" value="Bacteria"/>
</dbReference>
<dbReference type="HOGENOM" id="CLU_079503_1_0_6"/>
<dbReference type="OrthoDB" id="9793584at2"/>
<dbReference type="Proteomes" id="UP000001022">
    <property type="component" value="Chromosome"/>
</dbReference>
<dbReference type="GO" id="GO:0005886">
    <property type="term" value="C:plasma membrane"/>
    <property type="evidence" value="ECO:0007669"/>
    <property type="project" value="UniProtKB-SubCell"/>
</dbReference>
<dbReference type="GO" id="GO:0020037">
    <property type="term" value="F:heme binding"/>
    <property type="evidence" value="ECO:0007669"/>
    <property type="project" value="InterPro"/>
</dbReference>
<dbReference type="GO" id="GO:0046872">
    <property type="term" value="F:metal ion binding"/>
    <property type="evidence" value="ECO:0007669"/>
    <property type="project" value="UniProtKB-KW"/>
</dbReference>
<dbReference type="GO" id="GO:0017004">
    <property type="term" value="P:cytochrome complex assembly"/>
    <property type="evidence" value="ECO:0007669"/>
    <property type="project" value="UniProtKB-KW"/>
</dbReference>
<dbReference type="FunFam" id="2.40.50.140:FF:000104">
    <property type="entry name" value="Cytochrome c-type biogenesis protein CcmE"/>
    <property type="match status" value="1"/>
</dbReference>
<dbReference type="Gene3D" id="2.40.50.140">
    <property type="entry name" value="Nucleic acid-binding proteins"/>
    <property type="match status" value="1"/>
</dbReference>
<dbReference type="HAMAP" id="MF_01959">
    <property type="entry name" value="CcmE"/>
    <property type="match status" value="1"/>
</dbReference>
<dbReference type="InterPro" id="IPR004329">
    <property type="entry name" value="CcmE"/>
</dbReference>
<dbReference type="InterPro" id="IPR036127">
    <property type="entry name" value="CcmE-like_sf"/>
</dbReference>
<dbReference type="InterPro" id="IPR012340">
    <property type="entry name" value="NA-bd_OB-fold"/>
</dbReference>
<dbReference type="NCBIfam" id="NF009638">
    <property type="entry name" value="PRK13165.1"/>
    <property type="match status" value="1"/>
</dbReference>
<dbReference type="NCBIfam" id="NF009727">
    <property type="entry name" value="PRK13254.1-1"/>
    <property type="match status" value="1"/>
</dbReference>
<dbReference type="NCBIfam" id="NF009729">
    <property type="entry name" value="PRK13254.1-3"/>
    <property type="match status" value="1"/>
</dbReference>
<dbReference type="NCBIfam" id="NF009731">
    <property type="entry name" value="PRK13254.1-5"/>
    <property type="match status" value="1"/>
</dbReference>
<dbReference type="PANTHER" id="PTHR34128">
    <property type="entry name" value="CYTOCHROME C-TYPE BIOGENESIS PROTEIN CCME HOMOLOG, MITOCHONDRIAL"/>
    <property type="match status" value="1"/>
</dbReference>
<dbReference type="PANTHER" id="PTHR34128:SF2">
    <property type="entry name" value="CYTOCHROME C-TYPE BIOGENESIS PROTEIN CCME HOMOLOG, MITOCHONDRIAL"/>
    <property type="match status" value="1"/>
</dbReference>
<dbReference type="Pfam" id="PF03100">
    <property type="entry name" value="CcmE"/>
    <property type="match status" value="1"/>
</dbReference>
<dbReference type="SUPFAM" id="SSF82093">
    <property type="entry name" value="Heme chaperone CcmE"/>
    <property type="match status" value="1"/>
</dbReference>
<protein>
    <recommendedName>
        <fullName evidence="1">Cytochrome c-type biogenesis protein CcmE</fullName>
    </recommendedName>
    <alternativeName>
        <fullName evidence="1">Cytochrome c maturation protein E</fullName>
    </alternativeName>
    <alternativeName>
        <fullName evidence="1">Heme chaperone CcmE</fullName>
    </alternativeName>
</protein>
<feature type="chain" id="PRO_0000238812" description="Cytochrome c-type biogenesis protein CcmE">
    <location>
        <begin position="1"/>
        <end position="181"/>
    </location>
</feature>
<feature type="topological domain" description="Cytoplasmic" evidence="1">
    <location>
        <begin position="1"/>
        <end position="8"/>
    </location>
</feature>
<feature type="transmembrane region" description="Helical; Signal-anchor for type II membrane protein" evidence="1">
    <location>
        <begin position="9"/>
        <end position="29"/>
    </location>
</feature>
<feature type="topological domain" description="Periplasmic" evidence="1">
    <location>
        <begin position="30"/>
        <end position="181"/>
    </location>
</feature>
<feature type="binding site" description="covalent" evidence="1">
    <location>
        <position position="131"/>
    </location>
    <ligand>
        <name>heme</name>
        <dbReference type="ChEBI" id="CHEBI:30413"/>
    </ligand>
</feature>
<feature type="binding site" description="axial binding residue" evidence="1">
    <location>
        <position position="135"/>
    </location>
    <ligand>
        <name>heme</name>
        <dbReference type="ChEBI" id="CHEBI:30413"/>
    </ligand>
    <ligandPart>
        <name>Fe</name>
        <dbReference type="ChEBI" id="CHEBI:18248"/>
    </ligandPart>
</feature>
<accession>Q7VN08</accession>
<comment type="function">
    <text evidence="1">Heme chaperone required for the biogenesis of c-type cytochromes. Transiently binds heme delivered by CcmC and transfers the heme to apo-cytochromes in a process facilitated by CcmF and CcmH.</text>
</comment>
<comment type="subcellular location">
    <subcellularLocation>
        <location evidence="1">Cell inner membrane</location>
        <topology evidence="1">Single-pass type II membrane protein</topology>
        <orientation evidence="1">Periplasmic side</orientation>
    </subcellularLocation>
</comment>
<comment type="similarity">
    <text evidence="1">Belongs to the CcmE/CycJ family.</text>
</comment>
<proteinExistence type="inferred from homology"/>
<name>CCME_HAEDU</name>
<keyword id="KW-0997">Cell inner membrane</keyword>
<keyword id="KW-1003">Cell membrane</keyword>
<keyword id="KW-0201">Cytochrome c-type biogenesis</keyword>
<keyword id="KW-0349">Heme</keyword>
<keyword id="KW-0408">Iron</keyword>
<keyword id="KW-0472">Membrane</keyword>
<keyword id="KW-0479">Metal-binding</keyword>
<keyword id="KW-1185">Reference proteome</keyword>
<keyword id="KW-0735">Signal-anchor</keyword>
<keyword id="KW-0812">Transmembrane</keyword>
<keyword id="KW-1133">Transmembrane helix</keyword>